<proteinExistence type="inferred from homology"/>
<sequence length="159" mass="18099">MKIKVVTVGKLKEKYLKDGIAEYSKRISRFAKFEMIELSDEKTPDKASESENQKILEIEGQRILSKIADRDFVIVLAIEGKTFFSEEFSKQLEETSIKGFSTLTFIIGGSLGLSSSVKNRANLSVSFGRLTLPHQLMRLVLVEQIYRAFTIQQGFPYHK</sequence>
<dbReference type="EC" id="2.1.1.177" evidence="1"/>
<dbReference type="EMBL" id="AF000658">
    <property type="protein sequence ID" value="AAC45340.1"/>
    <property type="molecule type" value="Genomic_DNA"/>
</dbReference>
<dbReference type="EMBL" id="AE005672">
    <property type="protein sequence ID" value="AAK76285.1"/>
    <property type="molecule type" value="Genomic_DNA"/>
</dbReference>
<dbReference type="EMBL" id="U33315">
    <property type="protein sequence ID" value="AAC44439.1"/>
    <property type="molecule type" value="Genomic_DNA"/>
</dbReference>
<dbReference type="PIR" id="D95261">
    <property type="entry name" value="D95261"/>
</dbReference>
<dbReference type="RefSeq" id="WP_000695929.1">
    <property type="nucleotide sequence ID" value="NZ_CP155539.1"/>
</dbReference>
<dbReference type="SMR" id="P0A4S3"/>
<dbReference type="PaxDb" id="170187-SP_2238"/>
<dbReference type="EnsemblBacteria" id="AAK76285">
    <property type="protein sequence ID" value="AAK76285"/>
    <property type="gene ID" value="SP_2238"/>
</dbReference>
<dbReference type="GeneID" id="45652538"/>
<dbReference type="KEGG" id="spn:SP_2238"/>
<dbReference type="eggNOG" id="COG1576">
    <property type="taxonomic scope" value="Bacteria"/>
</dbReference>
<dbReference type="PhylomeDB" id="P0A4S3"/>
<dbReference type="BioCyc" id="SPNE170187:G1FZB-2342-MONOMER"/>
<dbReference type="Proteomes" id="UP000000585">
    <property type="component" value="Chromosome"/>
</dbReference>
<dbReference type="GO" id="GO:0005737">
    <property type="term" value="C:cytoplasm"/>
    <property type="evidence" value="ECO:0007669"/>
    <property type="project" value="UniProtKB-SubCell"/>
</dbReference>
<dbReference type="GO" id="GO:0070038">
    <property type="term" value="F:rRNA (pseudouridine-N3-)-methyltransferase activity"/>
    <property type="evidence" value="ECO:0007669"/>
    <property type="project" value="UniProtKB-UniRule"/>
</dbReference>
<dbReference type="CDD" id="cd18081">
    <property type="entry name" value="RlmH-like"/>
    <property type="match status" value="1"/>
</dbReference>
<dbReference type="Gene3D" id="3.40.1280.10">
    <property type="match status" value="1"/>
</dbReference>
<dbReference type="HAMAP" id="MF_00658">
    <property type="entry name" value="23SrRNA_methyltr_H"/>
    <property type="match status" value="1"/>
</dbReference>
<dbReference type="InterPro" id="IPR029028">
    <property type="entry name" value="Alpha/beta_knot_MTases"/>
</dbReference>
<dbReference type="InterPro" id="IPR003742">
    <property type="entry name" value="RlmH-like"/>
</dbReference>
<dbReference type="InterPro" id="IPR029026">
    <property type="entry name" value="tRNA_m1G_MTases_N"/>
</dbReference>
<dbReference type="NCBIfam" id="NF000985">
    <property type="entry name" value="PRK00103.1-3"/>
    <property type="match status" value="1"/>
</dbReference>
<dbReference type="NCBIfam" id="TIGR00246">
    <property type="entry name" value="tRNA_RlmH_YbeA"/>
    <property type="match status" value="1"/>
</dbReference>
<dbReference type="PANTHER" id="PTHR33603">
    <property type="entry name" value="METHYLTRANSFERASE"/>
    <property type="match status" value="1"/>
</dbReference>
<dbReference type="PANTHER" id="PTHR33603:SF1">
    <property type="entry name" value="RIBOSOMAL RNA LARGE SUBUNIT METHYLTRANSFERASE H"/>
    <property type="match status" value="1"/>
</dbReference>
<dbReference type="Pfam" id="PF02590">
    <property type="entry name" value="SPOUT_MTase"/>
    <property type="match status" value="1"/>
</dbReference>
<dbReference type="PIRSF" id="PIRSF004505">
    <property type="entry name" value="MT_bac"/>
    <property type="match status" value="1"/>
</dbReference>
<dbReference type="SUPFAM" id="SSF75217">
    <property type="entry name" value="alpha/beta knot"/>
    <property type="match status" value="1"/>
</dbReference>
<reference key="1">
    <citation type="journal article" date="1997" name="Mol. Microbiol.">
        <title>The com locus controls genetic transformation in Streptococcus pneumoniae.</title>
        <authorList>
            <person name="Cheng Q."/>
            <person name="Campbell E.A."/>
            <person name="Naughton A.M."/>
            <person name="Johnson S."/>
            <person name="Masure H.R."/>
        </authorList>
    </citation>
    <scope>NUCLEOTIDE SEQUENCE [GENOMIC DNA]</scope>
    <source>
        <strain>R6 / R801</strain>
    </source>
</reference>
<reference key="2">
    <citation type="journal article" date="1998" name="Microbiology">
        <title>Organization around the dnaA gene of Streptococcus pneumoniae.</title>
        <authorList>
            <person name="Gasc A.M."/>
            <person name="Giammarinaro P."/>
            <person name="Richter S."/>
            <person name="Sicard M."/>
        </authorList>
    </citation>
    <scope>NUCLEOTIDE SEQUENCE [GENOMIC DNA]</scope>
    <source>
        <strain evidence="2">R6 / R801</strain>
    </source>
</reference>
<reference key="3">
    <citation type="journal article" date="2001" name="Science">
        <title>Complete genome sequence of a virulent isolate of Streptococcus pneumoniae.</title>
        <authorList>
            <person name="Tettelin H."/>
            <person name="Nelson K.E."/>
            <person name="Paulsen I.T."/>
            <person name="Eisen J.A."/>
            <person name="Read T.D."/>
            <person name="Peterson S.N."/>
            <person name="Heidelberg J.F."/>
            <person name="DeBoy R.T."/>
            <person name="Haft D.H."/>
            <person name="Dodson R.J."/>
            <person name="Durkin A.S."/>
            <person name="Gwinn M.L."/>
            <person name="Kolonay J.F."/>
            <person name="Nelson W.C."/>
            <person name="Peterson J.D."/>
            <person name="Umayam L.A."/>
            <person name="White O."/>
            <person name="Salzberg S.L."/>
            <person name="Lewis M.R."/>
            <person name="Radune D."/>
            <person name="Holtzapple E.K."/>
            <person name="Khouri H.M."/>
            <person name="Wolf A.M."/>
            <person name="Utterback T.R."/>
            <person name="Hansen C.L."/>
            <person name="McDonald L.A."/>
            <person name="Feldblyum T.V."/>
            <person name="Angiuoli S.V."/>
            <person name="Dickinson T."/>
            <person name="Hickey E.K."/>
            <person name="Holt I.E."/>
            <person name="Loftus B.J."/>
            <person name="Yang F."/>
            <person name="Smith H.O."/>
            <person name="Venter J.C."/>
            <person name="Dougherty B.A."/>
            <person name="Morrison D.A."/>
            <person name="Hollingshead S.K."/>
            <person name="Fraser C.M."/>
        </authorList>
    </citation>
    <scope>NUCLEOTIDE SEQUENCE [LARGE SCALE GENOMIC DNA]</scope>
    <source>
        <strain>ATCC BAA-334 / TIGR4</strain>
    </source>
</reference>
<comment type="function">
    <text evidence="1">Specifically methylates the pseudouridine at position 1915 (m3Psi1915) in 23S rRNA.</text>
</comment>
<comment type="catalytic activity">
    <reaction evidence="1">
        <text>pseudouridine(1915) in 23S rRNA + S-adenosyl-L-methionine = N(3)-methylpseudouridine(1915) in 23S rRNA + S-adenosyl-L-homocysteine + H(+)</text>
        <dbReference type="Rhea" id="RHEA:42752"/>
        <dbReference type="Rhea" id="RHEA-COMP:10221"/>
        <dbReference type="Rhea" id="RHEA-COMP:10222"/>
        <dbReference type="ChEBI" id="CHEBI:15378"/>
        <dbReference type="ChEBI" id="CHEBI:57856"/>
        <dbReference type="ChEBI" id="CHEBI:59789"/>
        <dbReference type="ChEBI" id="CHEBI:65314"/>
        <dbReference type="ChEBI" id="CHEBI:74486"/>
        <dbReference type="EC" id="2.1.1.177"/>
    </reaction>
</comment>
<comment type="subunit">
    <text evidence="1">Homodimer.</text>
</comment>
<comment type="subcellular location">
    <subcellularLocation>
        <location evidence="1">Cytoplasm</location>
    </subcellularLocation>
</comment>
<comment type="similarity">
    <text evidence="1">Belongs to the RNA methyltransferase RlmH family.</text>
</comment>
<accession>P0A4S3</accession>
<accession>O08135</accession>
<accession>P72565</accession>
<accession>Q8DMW3</accession>
<gene>
    <name evidence="1" type="primary">rlmH</name>
    <name type="ordered locus">SP_2238</name>
</gene>
<organism>
    <name type="scientific">Streptococcus pneumoniae serotype 4 (strain ATCC BAA-334 / TIGR4)</name>
    <dbReference type="NCBI Taxonomy" id="170187"/>
    <lineage>
        <taxon>Bacteria</taxon>
        <taxon>Bacillati</taxon>
        <taxon>Bacillota</taxon>
        <taxon>Bacilli</taxon>
        <taxon>Lactobacillales</taxon>
        <taxon>Streptococcaceae</taxon>
        <taxon>Streptococcus</taxon>
    </lineage>
</organism>
<name>RLMH_STRPN</name>
<protein>
    <recommendedName>
        <fullName evidence="1">Ribosomal RNA large subunit methyltransferase H</fullName>
        <ecNumber evidence="1">2.1.1.177</ecNumber>
    </recommendedName>
    <alternativeName>
        <fullName evidence="1">23S rRNA (pseudouridine1915-N3)-methyltransferase</fullName>
    </alternativeName>
    <alternativeName>
        <fullName evidence="1">23S rRNA m3Psi1915 methyltransferase</fullName>
    </alternativeName>
    <alternativeName>
        <fullName evidence="1">rRNA (pseudouridine-N3-)-methyltransferase RlmH</fullName>
    </alternativeName>
</protein>
<feature type="chain" id="PRO_0000198190" description="Ribosomal RNA large subunit methyltransferase H">
    <location>
        <begin position="1"/>
        <end position="159"/>
    </location>
</feature>
<feature type="binding site" evidence="1">
    <location>
        <position position="76"/>
    </location>
    <ligand>
        <name>S-adenosyl-L-methionine</name>
        <dbReference type="ChEBI" id="CHEBI:59789"/>
    </ligand>
</feature>
<feature type="binding site" evidence="1">
    <location>
        <position position="108"/>
    </location>
    <ligand>
        <name>S-adenosyl-L-methionine</name>
        <dbReference type="ChEBI" id="CHEBI:59789"/>
    </ligand>
</feature>
<feature type="binding site" evidence="1">
    <location>
        <begin position="127"/>
        <end position="132"/>
    </location>
    <ligand>
        <name>S-adenosyl-L-methionine</name>
        <dbReference type="ChEBI" id="CHEBI:59789"/>
    </ligand>
</feature>
<keyword id="KW-0963">Cytoplasm</keyword>
<keyword id="KW-0489">Methyltransferase</keyword>
<keyword id="KW-1185">Reference proteome</keyword>
<keyword id="KW-0698">rRNA processing</keyword>
<keyword id="KW-0949">S-adenosyl-L-methionine</keyword>
<keyword id="KW-0808">Transferase</keyword>
<evidence type="ECO:0000255" key="1">
    <source>
        <dbReference type="HAMAP-Rule" id="MF_00658"/>
    </source>
</evidence>
<evidence type="ECO:0000303" key="2">
    <source>
    </source>
</evidence>